<evidence type="ECO:0000255" key="1">
    <source>
        <dbReference type="HAMAP-Rule" id="MF_00652"/>
    </source>
</evidence>
<gene>
    <name type="ordered locus">SAG2081</name>
</gene>
<comment type="similarity">
    <text evidence="1">Belongs to the UPF0246 family.</text>
</comment>
<accession>Q8DWY0</accession>
<proteinExistence type="inferred from homology"/>
<sequence length="243" mass="28282">MIKILIPTAKEMKVCQNIAWPKLSAQTKIIIDYFSTLTVSDLEDIYRINTSAARCEAQRWQDFKAKQLTLNPAIKLFNGLMYRNIKRHNLSTSEAQFMENSVFITSALYGIIPAMTLISPHRLDFNTKIKINNNSLKVFWRENYDTFMQSDDIMVSLLSNEFETVFSPKERQKLIHLNFIEDRDGQLKTHSTISKKARGKCLTAMMENNCQTLEHLKQLRFDGFCYDNELSDSKQLTFVKKQT</sequence>
<feature type="chain" id="PRO_0000204006" description="UPF0246 protein SAG2081">
    <location>
        <begin position="1"/>
        <end position="243"/>
    </location>
</feature>
<name>Y2081_STRA5</name>
<organism>
    <name type="scientific">Streptococcus agalactiae serotype V (strain ATCC BAA-611 / 2603 V/R)</name>
    <dbReference type="NCBI Taxonomy" id="208435"/>
    <lineage>
        <taxon>Bacteria</taxon>
        <taxon>Bacillati</taxon>
        <taxon>Bacillota</taxon>
        <taxon>Bacilli</taxon>
        <taxon>Lactobacillales</taxon>
        <taxon>Streptococcaceae</taxon>
        <taxon>Streptococcus</taxon>
    </lineage>
</organism>
<protein>
    <recommendedName>
        <fullName evidence="1">UPF0246 protein SAG2081</fullName>
    </recommendedName>
</protein>
<keyword id="KW-1185">Reference proteome</keyword>
<dbReference type="EMBL" id="AE009948">
    <property type="protein sequence ID" value="AAN00940.1"/>
    <property type="molecule type" value="Genomic_DNA"/>
</dbReference>
<dbReference type="RefSeq" id="NP_689067.1">
    <property type="nucleotide sequence ID" value="NC_004116.1"/>
</dbReference>
<dbReference type="SMR" id="Q8DWY0"/>
<dbReference type="STRING" id="208435.SAG2081"/>
<dbReference type="KEGG" id="sag:SAG2081"/>
<dbReference type="PATRIC" id="fig|208435.3.peg.2083"/>
<dbReference type="HOGENOM" id="CLU_061989_2_1_9"/>
<dbReference type="OrthoDB" id="9777133at2"/>
<dbReference type="Proteomes" id="UP000000821">
    <property type="component" value="Chromosome"/>
</dbReference>
<dbReference type="GO" id="GO:0005829">
    <property type="term" value="C:cytosol"/>
    <property type="evidence" value="ECO:0007669"/>
    <property type="project" value="TreeGrafter"/>
</dbReference>
<dbReference type="GO" id="GO:0033194">
    <property type="term" value="P:response to hydroperoxide"/>
    <property type="evidence" value="ECO:0007669"/>
    <property type="project" value="TreeGrafter"/>
</dbReference>
<dbReference type="HAMAP" id="MF_00652">
    <property type="entry name" value="UPF0246"/>
    <property type="match status" value="1"/>
</dbReference>
<dbReference type="InterPro" id="IPR005583">
    <property type="entry name" value="YaaA"/>
</dbReference>
<dbReference type="NCBIfam" id="NF002543">
    <property type="entry name" value="PRK02101.1-4"/>
    <property type="match status" value="1"/>
</dbReference>
<dbReference type="PANTHER" id="PTHR30283:SF4">
    <property type="entry name" value="PEROXIDE STRESS RESISTANCE PROTEIN YAAA"/>
    <property type="match status" value="1"/>
</dbReference>
<dbReference type="PANTHER" id="PTHR30283">
    <property type="entry name" value="PEROXIDE STRESS RESPONSE PROTEIN YAAA"/>
    <property type="match status" value="1"/>
</dbReference>
<dbReference type="Pfam" id="PF03883">
    <property type="entry name" value="H2O2_YaaD"/>
    <property type="match status" value="1"/>
</dbReference>
<reference key="1">
    <citation type="journal article" date="2002" name="Proc. Natl. Acad. Sci. U.S.A.">
        <title>Complete genome sequence and comparative genomic analysis of an emerging human pathogen, serotype V Streptococcus agalactiae.</title>
        <authorList>
            <person name="Tettelin H."/>
            <person name="Masignani V."/>
            <person name="Cieslewicz M.J."/>
            <person name="Eisen J.A."/>
            <person name="Peterson S.N."/>
            <person name="Wessels M.R."/>
            <person name="Paulsen I.T."/>
            <person name="Nelson K.E."/>
            <person name="Margarit I."/>
            <person name="Read T.D."/>
            <person name="Madoff L.C."/>
            <person name="Wolf A.M."/>
            <person name="Beanan M.J."/>
            <person name="Brinkac L.M."/>
            <person name="Daugherty S.C."/>
            <person name="DeBoy R.T."/>
            <person name="Durkin A.S."/>
            <person name="Kolonay J.F."/>
            <person name="Madupu R."/>
            <person name="Lewis M.R."/>
            <person name="Radune D."/>
            <person name="Fedorova N.B."/>
            <person name="Scanlan D."/>
            <person name="Khouri H.M."/>
            <person name="Mulligan S."/>
            <person name="Carty H.A."/>
            <person name="Cline R.T."/>
            <person name="Van Aken S.E."/>
            <person name="Gill J."/>
            <person name="Scarselli M."/>
            <person name="Mora M."/>
            <person name="Iacobini E.T."/>
            <person name="Brettoni C."/>
            <person name="Galli G."/>
            <person name="Mariani M."/>
            <person name="Vegni F."/>
            <person name="Maione D."/>
            <person name="Rinaudo D."/>
            <person name="Rappuoli R."/>
            <person name="Telford J.L."/>
            <person name="Kasper D.L."/>
            <person name="Grandi G."/>
            <person name="Fraser C.M."/>
        </authorList>
    </citation>
    <scope>NUCLEOTIDE SEQUENCE [LARGE SCALE GENOMIC DNA]</scope>
    <source>
        <strain>ATCC BAA-611 / 2603 V/R</strain>
    </source>
</reference>